<name>GRPE_SALEP</name>
<reference key="1">
    <citation type="journal article" date="2008" name="Genome Res.">
        <title>Comparative genome analysis of Salmonella enteritidis PT4 and Salmonella gallinarum 287/91 provides insights into evolutionary and host adaptation pathways.</title>
        <authorList>
            <person name="Thomson N.R."/>
            <person name="Clayton D.J."/>
            <person name="Windhorst D."/>
            <person name="Vernikos G."/>
            <person name="Davidson S."/>
            <person name="Churcher C."/>
            <person name="Quail M.A."/>
            <person name="Stevens M."/>
            <person name="Jones M.A."/>
            <person name="Watson M."/>
            <person name="Barron A."/>
            <person name="Layton A."/>
            <person name="Pickard D."/>
            <person name="Kingsley R.A."/>
            <person name="Bignell A."/>
            <person name="Clark L."/>
            <person name="Harris B."/>
            <person name="Ormond D."/>
            <person name="Abdellah Z."/>
            <person name="Brooks K."/>
            <person name="Cherevach I."/>
            <person name="Chillingworth T."/>
            <person name="Woodward J."/>
            <person name="Norberczak H."/>
            <person name="Lord A."/>
            <person name="Arrowsmith C."/>
            <person name="Jagels K."/>
            <person name="Moule S."/>
            <person name="Mungall K."/>
            <person name="Saunders M."/>
            <person name="Whitehead S."/>
            <person name="Chabalgoity J.A."/>
            <person name="Maskell D."/>
            <person name="Humphreys T."/>
            <person name="Roberts M."/>
            <person name="Barrow P.A."/>
            <person name="Dougan G."/>
            <person name="Parkhill J."/>
        </authorList>
    </citation>
    <scope>NUCLEOTIDE SEQUENCE [LARGE SCALE GENOMIC DNA]</scope>
    <source>
        <strain>P125109</strain>
    </source>
</reference>
<protein>
    <recommendedName>
        <fullName evidence="1">Protein GrpE</fullName>
    </recommendedName>
    <alternativeName>
        <fullName evidence="1">HSP-70 cofactor</fullName>
    </alternativeName>
</protein>
<comment type="function">
    <text evidence="1">Participates actively in the response to hyperosmotic and heat shock by preventing the aggregation of stress-denatured proteins, in association with DnaK and GrpE. It is the nucleotide exchange factor for DnaK and may function as a thermosensor. Unfolded proteins bind initially to DnaJ; upon interaction with the DnaJ-bound protein, DnaK hydrolyzes its bound ATP, resulting in the formation of a stable complex. GrpE releases ADP from DnaK; ATP binding to DnaK triggers the release of the substrate protein, thus completing the reaction cycle. Several rounds of ATP-dependent interactions between DnaJ, DnaK and GrpE are required for fully efficient folding.</text>
</comment>
<comment type="subunit">
    <text evidence="1">Homodimer.</text>
</comment>
<comment type="subcellular location">
    <subcellularLocation>
        <location evidence="1">Cytoplasm</location>
    </subcellularLocation>
</comment>
<comment type="similarity">
    <text evidence="1">Belongs to the GrpE family.</text>
</comment>
<keyword id="KW-0143">Chaperone</keyword>
<keyword id="KW-0963">Cytoplasm</keyword>
<keyword id="KW-0346">Stress response</keyword>
<proteinExistence type="inferred from homology"/>
<sequence length="196" mass="21841">MSSKEQKTPEGQAPEEIIMDQHEEVEAVEPNDSAEQVDPRDEKIANLEVQLAEAQTRERDTVLRIKAEMENLRRRTEQDIEKAHKFALEKFVNELLPVIDSLDRALEVADKANPDMAAMVEGIELTLKSMLDVVRKFGVEVIAETNVPLDPNVHQAIAMVESEEVPAGNVLGIMQKGYTLNGRTIRAAMVTVAKAK</sequence>
<accession>B5QUG9</accession>
<dbReference type="EMBL" id="AM933172">
    <property type="protein sequence ID" value="CAR34184.1"/>
    <property type="molecule type" value="Genomic_DNA"/>
</dbReference>
<dbReference type="RefSeq" id="WP_001518875.1">
    <property type="nucleotide sequence ID" value="NC_011294.1"/>
</dbReference>
<dbReference type="SMR" id="B5QUG9"/>
<dbReference type="KEGG" id="set:SEN2602"/>
<dbReference type="HOGENOM" id="CLU_057217_6_0_6"/>
<dbReference type="Proteomes" id="UP000000613">
    <property type="component" value="Chromosome"/>
</dbReference>
<dbReference type="GO" id="GO:0005829">
    <property type="term" value="C:cytosol"/>
    <property type="evidence" value="ECO:0007669"/>
    <property type="project" value="TreeGrafter"/>
</dbReference>
<dbReference type="GO" id="GO:0000774">
    <property type="term" value="F:adenyl-nucleotide exchange factor activity"/>
    <property type="evidence" value="ECO:0007669"/>
    <property type="project" value="InterPro"/>
</dbReference>
<dbReference type="GO" id="GO:0042803">
    <property type="term" value="F:protein homodimerization activity"/>
    <property type="evidence" value="ECO:0007669"/>
    <property type="project" value="InterPro"/>
</dbReference>
<dbReference type="GO" id="GO:0051087">
    <property type="term" value="F:protein-folding chaperone binding"/>
    <property type="evidence" value="ECO:0007669"/>
    <property type="project" value="InterPro"/>
</dbReference>
<dbReference type="GO" id="GO:0051082">
    <property type="term" value="F:unfolded protein binding"/>
    <property type="evidence" value="ECO:0007669"/>
    <property type="project" value="TreeGrafter"/>
</dbReference>
<dbReference type="GO" id="GO:0006457">
    <property type="term" value="P:protein folding"/>
    <property type="evidence" value="ECO:0007669"/>
    <property type="project" value="InterPro"/>
</dbReference>
<dbReference type="CDD" id="cd00446">
    <property type="entry name" value="GrpE"/>
    <property type="match status" value="1"/>
</dbReference>
<dbReference type="FunFam" id="2.30.22.10:FF:000001">
    <property type="entry name" value="Protein GrpE"/>
    <property type="match status" value="1"/>
</dbReference>
<dbReference type="FunFam" id="3.90.20.20:FF:000001">
    <property type="entry name" value="Protein GrpE"/>
    <property type="match status" value="1"/>
</dbReference>
<dbReference type="Gene3D" id="3.90.20.20">
    <property type="match status" value="1"/>
</dbReference>
<dbReference type="Gene3D" id="2.30.22.10">
    <property type="entry name" value="Head domain of nucleotide exchange factor GrpE"/>
    <property type="match status" value="1"/>
</dbReference>
<dbReference type="HAMAP" id="MF_01151">
    <property type="entry name" value="GrpE"/>
    <property type="match status" value="1"/>
</dbReference>
<dbReference type="InterPro" id="IPR000740">
    <property type="entry name" value="GrpE"/>
</dbReference>
<dbReference type="InterPro" id="IPR013805">
    <property type="entry name" value="GrpE_coiled_coil"/>
</dbReference>
<dbReference type="InterPro" id="IPR009012">
    <property type="entry name" value="GrpE_head"/>
</dbReference>
<dbReference type="NCBIfam" id="NF007655">
    <property type="entry name" value="PRK10325.1"/>
    <property type="match status" value="1"/>
</dbReference>
<dbReference type="NCBIfam" id="NF010738">
    <property type="entry name" value="PRK14140.1"/>
    <property type="match status" value="1"/>
</dbReference>
<dbReference type="NCBIfam" id="NF010748">
    <property type="entry name" value="PRK14150.1"/>
    <property type="match status" value="1"/>
</dbReference>
<dbReference type="PANTHER" id="PTHR21237">
    <property type="entry name" value="GRPE PROTEIN"/>
    <property type="match status" value="1"/>
</dbReference>
<dbReference type="PANTHER" id="PTHR21237:SF23">
    <property type="entry name" value="GRPE PROTEIN HOMOLOG, MITOCHONDRIAL"/>
    <property type="match status" value="1"/>
</dbReference>
<dbReference type="Pfam" id="PF01025">
    <property type="entry name" value="GrpE"/>
    <property type="match status" value="1"/>
</dbReference>
<dbReference type="PRINTS" id="PR00773">
    <property type="entry name" value="GRPEPROTEIN"/>
</dbReference>
<dbReference type="SUPFAM" id="SSF58014">
    <property type="entry name" value="Coiled-coil domain of nucleotide exchange factor GrpE"/>
    <property type="match status" value="1"/>
</dbReference>
<dbReference type="SUPFAM" id="SSF51064">
    <property type="entry name" value="Head domain of nucleotide exchange factor GrpE"/>
    <property type="match status" value="1"/>
</dbReference>
<dbReference type="PROSITE" id="PS01071">
    <property type="entry name" value="GRPE"/>
    <property type="match status" value="1"/>
</dbReference>
<gene>
    <name evidence="1" type="primary">grpE</name>
    <name type="ordered locus">SEN2602</name>
</gene>
<feature type="chain" id="PRO_1000137609" description="Protein GrpE">
    <location>
        <begin position="1"/>
        <end position="196"/>
    </location>
</feature>
<feature type="region of interest" description="Disordered" evidence="2">
    <location>
        <begin position="1"/>
        <end position="40"/>
    </location>
</feature>
<organism>
    <name type="scientific">Salmonella enteritidis PT4 (strain P125109)</name>
    <dbReference type="NCBI Taxonomy" id="550537"/>
    <lineage>
        <taxon>Bacteria</taxon>
        <taxon>Pseudomonadati</taxon>
        <taxon>Pseudomonadota</taxon>
        <taxon>Gammaproteobacteria</taxon>
        <taxon>Enterobacterales</taxon>
        <taxon>Enterobacteriaceae</taxon>
        <taxon>Salmonella</taxon>
    </lineage>
</organism>
<evidence type="ECO:0000255" key="1">
    <source>
        <dbReference type="HAMAP-Rule" id="MF_01151"/>
    </source>
</evidence>
<evidence type="ECO:0000256" key="2">
    <source>
        <dbReference type="SAM" id="MobiDB-lite"/>
    </source>
</evidence>